<keyword id="KW-0444">Lipid biosynthesis</keyword>
<keyword id="KW-0443">Lipid metabolism</keyword>
<keyword id="KW-0460">Magnesium</keyword>
<keyword id="KW-0479">Metal-binding</keyword>
<keyword id="KW-1185">Reference proteome</keyword>
<keyword id="KW-0752">Steroid biosynthesis</keyword>
<keyword id="KW-0753">Steroid metabolism</keyword>
<keyword id="KW-0756">Sterol biosynthesis</keyword>
<keyword id="KW-1207">Sterol metabolism</keyword>
<keyword id="KW-0808">Transferase</keyword>
<feature type="chain" id="PRO_0000454677" description="Farnesyl pyrophosphate synthase ERG20">
    <location>
        <begin position="1"/>
        <end position="347"/>
    </location>
</feature>
<feature type="binding site" evidence="2">
    <location>
        <position position="50"/>
    </location>
    <ligand>
        <name>isopentenyl diphosphate</name>
        <dbReference type="ChEBI" id="CHEBI:128769"/>
    </ligand>
</feature>
<feature type="binding site" evidence="2">
    <location>
        <position position="53"/>
    </location>
    <ligand>
        <name>isopentenyl diphosphate</name>
        <dbReference type="ChEBI" id="CHEBI:128769"/>
    </ligand>
</feature>
<feature type="binding site" evidence="2">
    <location>
        <position position="88"/>
    </location>
    <ligand>
        <name>isopentenyl diphosphate</name>
        <dbReference type="ChEBI" id="CHEBI:128769"/>
    </ligand>
</feature>
<feature type="binding site" evidence="2">
    <location>
        <position position="95"/>
    </location>
    <ligand>
        <name>Mg(2+)</name>
        <dbReference type="ChEBI" id="CHEBI:18420"/>
        <label>1</label>
    </ligand>
</feature>
<feature type="binding site" evidence="2">
    <location>
        <position position="95"/>
    </location>
    <ligand>
        <name>Mg(2+)</name>
        <dbReference type="ChEBI" id="CHEBI:18420"/>
        <label>2</label>
    </ligand>
</feature>
<feature type="binding site" evidence="2">
    <location>
        <position position="99"/>
    </location>
    <ligand>
        <name>Mg(2+)</name>
        <dbReference type="ChEBI" id="CHEBI:18420"/>
        <label>1</label>
    </ligand>
</feature>
<feature type="binding site" evidence="2">
    <location>
        <position position="99"/>
    </location>
    <ligand>
        <name>Mg(2+)</name>
        <dbReference type="ChEBI" id="CHEBI:18420"/>
        <label>2</label>
    </ligand>
</feature>
<feature type="binding site" evidence="2">
    <location>
        <position position="104"/>
    </location>
    <ligand>
        <name>dimethylallyl diphosphate</name>
        <dbReference type="ChEBI" id="CHEBI:57623"/>
    </ligand>
</feature>
<feature type="binding site" evidence="2">
    <location>
        <position position="105"/>
    </location>
    <ligand>
        <name>isopentenyl diphosphate</name>
        <dbReference type="ChEBI" id="CHEBI:128769"/>
    </ligand>
</feature>
<feature type="binding site" evidence="2">
    <location>
        <position position="192"/>
    </location>
    <ligand>
        <name>dimethylallyl diphosphate</name>
        <dbReference type="ChEBI" id="CHEBI:57623"/>
    </ligand>
</feature>
<feature type="binding site" evidence="2">
    <location>
        <position position="193"/>
    </location>
    <ligand>
        <name>dimethylallyl diphosphate</name>
        <dbReference type="ChEBI" id="CHEBI:57623"/>
    </ligand>
</feature>
<feature type="binding site" evidence="2">
    <location>
        <position position="232"/>
    </location>
    <ligand>
        <name>dimethylallyl diphosphate</name>
        <dbReference type="ChEBI" id="CHEBI:57623"/>
    </ligand>
</feature>
<feature type="binding site" evidence="2">
    <location>
        <position position="249"/>
    </location>
    <ligand>
        <name>dimethylallyl diphosphate</name>
        <dbReference type="ChEBI" id="CHEBI:57623"/>
    </ligand>
</feature>
<feature type="binding site" evidence="2">
    <location>
        <position position="258"/>
    </location>
    <ligand>
        <name>dimethylallyl diphosphate</name>
        <dbReference type="ChEBI" id="CHEBI:57623"/>
    </ligand>
</feature>
<reference key="1">
    <citation type="journal article" date="2007" name="Science">
        <title>The Fusarium graminearum genome reveals a link between localized polymorphism and pathogen specialization.</title>
        <authorList>
            <person name="Cuomo C.A."/>
            <person name="Gueldener U."/>
            <person name="Xu J.-R."/>
            <person name="Trail F."/>
            <person name="Turgeon B.G."/>
            <person name="Di Pietro A."/>
            <person name="Walton J.D."/>
            <person name="Ma L.-J."/>
            <person name="Baker S.E."/>
            <person name="Rep M."/>
            <person name="Adam G."/>
            <person name="Antoniw J."/>
            <person name="Baldwin T."/>
            <person name="Calvo S.E."/>
            <person name="Chang Y.-L."/>
            <person name="DeCaprio D."/>
            <person name="Gale L.R."/>
            <person name="Gnerre S."/>
            <person name="Goswami R.S."/>
            <person name="Hammond-Kosack K."/>
            <person name="Harris L.J."/>
            <person name="Hilburn K."/>
            <person name="Kennell J.C."/>
            <person name="Kroken S."/>
            <person name="Magnuson J.K."/>
            <person name="Mannhaupt G."/>
            <person name="Mauceli E.W."/>
            <person name="Mewes H.-W."/>
            <person name="Mitterbauer R."/>
            <person name="Muehlbauer G."/>
            <person name="Muensterkoetter M."/>
            <person name="Nelson D."/>
            <person name="O'Donnell K."/>
            <person name="Ouellet T."/>
            <person name="Qi W."/>
            <person name="Quesneville H."/>
            <person name="Roncero M.I.G."/>
            <person name="Seong K.-Y."/>
            <person name="Tetko I.V."/>
            <person name="Urban M."/>
            <person name="Waalwijk C."/>
            <person name="Ward T.J."/>
            <person name="Yao J."/>
            <person name="Birren B.W."/>
            <person name="Kistler H.C."/>
        </authorList>
    </citation>
    <scope>NUCLEOTIDE SEQUENCE [LARGE SCALE GENOMIC DNA]</scope>
    <source>
        <strain>ATCC MYA-4620 / CBS 123657 / FGSC 9075 / NRRL 31084 / PH-1</strain>
    </source>
</reference>
<reference key="2">
    <citation type="journal article" date="2010" name="Nature">
        <title>Comparative genomics reveals mobile pathogenicity chromosomes in Fusarium.</title>
        <authorList>
            <person name="Ma L.-J."/>
            <person name="van der Does H.C."/>
            <person name="Borkovich K.A."/>
            <person name="Coleman J.J."/>
            <person name="Daboussi M.-J."/>
            <person name="Di Pietro A."/>
            <person name="Dufresne M."/>
            <person name="Freitag M."/>
            <person name="Grabherr M."/>
            <person name="Henrissat B."/>
            <person name="Houterman P.M."/>
            <person name="Kang S."/>
            <person name="Shim W.-B."/>
            <person name="Woloshuk C."/>
            <person name="Xie X."/>
            <person name="Xu J.-R."/>
            <person name="Antoniw J."/>
            <person name="Baker S.E."/>
            <person name="Bluhm B.H."/>
            <person name="Breakspear A."/>
            <person name="Brown D.W."/>
            <person name="Butchko R.A.E."/>
            <person name="Chapman S."/>
            <person name="Coulson R."/>
            <person name="Coutinho P.M."/>
            <person name="Danchin E.G.J."/>
            <person name="Diener A."/>
            <person name="Gale L.R."/>
            <person name="Gardiner D.M."/>
            <person name="Goff S."/>
            <person name="Hammond-Kosack K.E."/>
            <person name="Hilburn K."/>
            <person name="Hua-Van A."/>
            <person name="Jonkers W."/>
            <person name="Kazan K."/>
            <person name="Kodira C.D."/>
            <person name="Koehrsen M."/>
            <person name="Kumar L."/>
            <person name="Lee Y.-H."/>
            <person name="Li L."/>
            <person name="Manners J.M."/>
            <person name="Miranda-Saavedra D."/>
            <person name="Mukherjee M."/>
            <person name="Park G."/>
            <person name="Park J."/>
            <person name="Park S.-Y."/>
            <person name="Proctor R.H."/>
            <person name="Regev A."/>
            <person name="Ruiz-Roldan M.C."/>
            <person name="Sain D."/>
            <person name="Sakthikumar S."/>
            <person name="Sykes S."/>
            <person name="Schwartz D.C."/>
            <person name="Turgeon B.G."/>
            <person name="Wapinski I."/>
            <person name="Yoder O."/>
            <person name="Young S."/>
            <person name="Zeng Q."/>
            <person name="Zhou S."/>
            <person name="Galagan J."/>
            <person name="Cuomo C.A."/>
            <person name="Kistler H.C."/>
            <person name="Rep M."/>
        </authorList>
    </citation>
    <scope>GENOME REANNOTATION</scope>
    <source>
        <strain>ATCC MYA-4620 / CBS 123657 / FGSC 9075 / NRRL 31084 / PH-1</strain>
    </source>
</reference>
<reference key="3">
    <citation type="journal article" date="2015" name="BMC Genomics">
        <title>The completed genome sequence of the pathogenic ascomycete fungus Fusarium graminearum.</title>
        <authorList>
            <person name="King R."/>
            <person name="Urban M."/>
            <person name="Hammond-Kosack M.C.U."/>
            <person name="Hassani-Pak K."/>
            <person name="Hammond-Kosack K.E."/>
        </authorList>
    </citation>
    <scope>NUCLEOTIDE SEQUENCE [LARGE SCALE GENOMIC DNA]</scope>
    <source>
        <strain>ATCC MYA-4620 / CBS 123657 / FGSC 9075 / NRRL 31084 / PH-1</strain>
    </source>
</reference>
<reference key="4">
    <citation type="journal article" date="2019" name="Nat. Commun.">
        <title>A phosphorylated transcription factor regulates sterol biosynthesis in Fusarium graminearum.</title>
        <authorList>
            <person name="Liu Z."/>
            <person name="Jian Y."/>
            <person name="Chen Y."/>
            <person name="Kistler H.C."/>
            <person name="He P."/>
            <person name="Ma Z."/>
            <person name="Yin Y."/>
        </authorList>
    </citation>
    <scope>FUNCTION</scope>
</reference>
<dbReference type="EC" id="2.5.1.10" evidence="5"/>
<dbReference type="EC" id="2.5.1.1" evidence="5"/>
<dbReference type="EMBL" id="HG970335">
    <property type="protein sequence ID" value="CEF84127.1"/>
    <property type="molecule type" value="Genomic_DNA"/>
</dbReference>
<dbReference type="RefSeq" id="XP_011326434.1">
    <property type="nucleotide sequence ID" value="XM_011328132.1"/>
</dbReference>
<dbReference type="SMR" id="V6RG22"/>
<dbReference type="FunCoup" id="V6RG22">
    <property type="interactions" value="848"/>
</dbReference>
<dbReference type="STRING" id="229533.V6RG22"/>
<dbReference type="KEGG" id="fgr:FGSG_06784"/>
<dbReference type="VEuPathDB" id="FungiDB:FGRAMPH1_01G23179"/>
<dbReference type="eggNOG" id="KOG0711">
    <property type="taxonomic scope" value="Eukaryota"/>
</dbReference>
<dbReference type="HOGENOM" id="CLU_028376_1_0_1"/>
<dbReference type="InParanoid" id="V6RG22"/>
<dbReference type="OrthoDB" id="53033at110618"/>
<dbReference type="UniPathway" id="UPA00259">
    <property type="reaction ID" value="UER00368"/>
</dbReference>
<dbReference type="UniPathway" id="UPA00260">
    <property type="reaction ID" value="UER00369"/>
</dbReference>
<dbReference type="Proteomes" id="UP000070720">
    <property type="component" value="Chromosome 4"/>
</dbReference>
<dbReference type="GO" id="GO:0005737">
    <property type="term" value="C:cytoplasm"/>
    <property type="evidence" value="ECO:0007669"/>
    <property type="project" value="TreeGrafter"/>
</dbReference>
<dbReference type="GO" id="GO:0004337">
    <property type="term" value="F:(2E,6E)-farnesyl diphosphate synthase activity"/>
    <property type="evidence" value="ECO:0007669"/>
    <property type="project" value="UniProtKB-EC"/>
</dbReference>
<dbReference type="GO" id="GO:0004161">
    <property type="term" value="F:dimethylallyltranstransferase activity"/>
    <property type="evidence" value="ECO:0007669"/>
    <property type="project" value="UniProtKB-EC"/>
</dbReference>
<dbReference type="GO" id="GO:0046872">
    <property type="term" value="F:metal ion binding"/>
    <property type="evidence" value="ECO:0007669"/>
    <property type="project" value="UniProtKB-KW"/>
</dbReference>
<dbReference type="GO" id="GO:0046165">
    <property type="term" value="P:alcohol biosynthetic process"/>
    <property type="evidence" value="ECO:0007669"/>
    <property type="project" value="UniProtKB-ARBA"/>
</dbReference>
<dbReference type="GO" id="GO:0045337">
    <property type="term" value="P:farnesyl diphosphate biosynthetic process"/>
    <property type="evidence" value="ECO:0007669"/>
    <property type="project" value="UniProtKB-UniPathway"/>
</dbReference>
<dbReference type="GO" id="GO:0033384">
    <property type="term" value="P:geranyl diphosphate biosynthetic process"/>
    <property type="evidence" value="ECO:0007669"/>
    <property type="project" value="UniProtKB-UniPathway"/>
</dbReference>
<dbReference type="GO" id="GO:0043386">
    <property type="term" value="P:mycotoxin biosynthetic process"/>
    <property type="evidence" value="ECO:0007669"/>
    <property type="project" value="UniProtKB-ARBA"/>
</dbReference>
<dbReference type="GO" id="GO:0016126">
    <property type="term" value="P:sterol biosynthetic process"/>
    <property type="evidence" value="ECO:0007669"/>
    <property type="project" value="UniProtKB-KW"/>
</dbReference>
<dbReference type="CDD" id="cd00685">
    <property type="entry name" value="Trans_IPPS_HT"/>
    <property type="match status" value="1"/>
</dbReference>
<dbReference type="FunFam" id="1.10.600.10:FF:000006">
    <property type="entry name" value="Farnesyl pyrophosphate synthase"/>
    <property type="match status" value="1"/>
</dbReference>
<dbReference type="Gene3D" id="1.10.600.10">
    <property type="entry name" value="Farnesyl Diphosphate Synthase"/>
    <property type="match status" value="1"/>
</dbReference>
<dbReference type="InterPro" id="IPR039702">
    <property type="entry name" value="FPS1-like"/>
</dbReference>
<dbReference type="InterPro" id="IPR008949">
    <property type="entry name" value="Isoprenoid_synthase_dom_sf"/>
</dbReference>
<dbReference type="InterPro" id="IPR000092">
    <property type="entry name" value="Polyprenyl_synt"/>
</dbReference>
<dbReference type="InterPro" id="IPR033749">
    <property type="entry name" value="Polyprenyl_synt_CS"/>
</dbReference>
<dbReference type="PANTHER" id="PTHR11525:SF0">
    <property type="entry name" value="FARNESYL PYROPHOSPHATE SYNTHASE"/>
    <property type="match status" value="1"/>
</dbReference>
<dbReference type="PANTHER" id="PTHR11525">
    <property type="entry name" value="FARNESYL-PYROPHOSPHATE SYNTHETASE"/>
    <property type="match status" value="1"/>
</dbReference>
<dbReference type="Pfam" id="PF00348">
    <property type="entry name" value="polyprenyl_synt"/>
    <property type="match status" value="1"/>
</dbReference>
<dbReference type="SFLD" id="SFLDS00005">
    <property type="entry name" value="Isoprenoid_Synthase_Type_I"/>
    <property type="match status" value="1"/>
</dbReference>
<dbReference type="SFLD" id="SFLDG01017">
    <property type="entry name" value="Polyprenyl_Transferase_Like"/>
    <property type="match status" value="1"/>
</dbReference>
<dbReference type="SUPFAM" id="SSF48576">
    <property type="entry name" value="Terpenoid synthases"/>
    <property type="match status" value="1"/>
</dbReference>
<dbReference type="PROSITE" id="PS00723">
    <property type="entry name" value="POLYPRENYL_SYNTHASE_1"/>
    <property type="match status" value="1"/>
</dbReference>
<dbReference type="PROSITE" id="PS00444">
    <property type="entry name" value="POLYPRENYL_SYNTHASE_2"/>
    <property type="match status" value="1"/>
</dbReference>
<organism>
    <name type="scientific">Gibberella zeae (strain ATCC MYA-4620 / CBS 123657 / FGSC 9075 / NRRL 31084 / PH-1)</name>
    <name type="common">Wheat head blight fungus</name>
    <name type="synonym">Fusarium graminearum</name>
    <dbReference type="NCBI Taxonomy" id="229533"/>
    <lineage>
        <taxon>Eukaryota</taxon>
        <taxon>Fungi</taxon>
        <taxon>Dikarya</taxon>
        <taxon>Ascomycota</taxon>
        <taxon>Pezizomycotina</taxon>
        <taxon>Sordariomycetes</taxon>
        <taxon>Hypocreomycetidae</taxon>
        <taxon>Hypocreales</taxon>
        <taxon>Nectriaceae</taxon>
        <taxon>Fusarium</taxon>
    </lineage>
</organism>
<comment type="function">
    <text evidence="1 5">Farnesyl pyrophosphate synthase; part of the second module of ergosterol biosynthesis pathway that includes the middle steps of the pathway (By similarity). ERG20 catalyzes the sequential condensation of isopentenyl pyrophosphate with dimethylallyl pyrophosphate, and then with the resultant geranylpyrophosphate to the ultimate product farnesyl pyrophosphate (By similarity). The second module is carried out in the vacuole and involves the formation of farnesyl diphosphate, which is also an important intermediate in the biosynthesis of ubiquinone, dolichol, heme and prenylated proteins. Activity by the mevalonate kinase ERG12 (FG05912) first converts mevalonate into 5-phosphomevalonate. 5-phosphomevalonate is then further converted to 5-diphosphomevalonate by the phosphomevalonate kinase ERG8 (FG09764). The diphosphomevalonate decarboxylase ERG19 (FG10424) then produces isopentenyl diphosphate. The isopentenyl-diphosphate delta-isomerase IDI1 (FG09722) then catalyzes the 1,3-allylic rearrangement of the homoallylic substrate isopentenyl (IPP) to its highly electrophilic allylic isomer, dimethylallyl diphosphate (DMAPP). Finally the farnesyl diphosphate synthase ERG20 (FG06784) catalyzes the sequential condensation of isopentenyl pyrophosphate with dimethylallyl pyrophosphate, and then with the resultant geranylpyrophosphate to the ultimate product farnesyl pyrophosphate (Probable).</text>
</comment>
<comment type="catalytic activity">
    <reaction evidence="5">
        <text>isopentenyl diphosphate + dimethylallyl diphosphate = (2E)-geranyl diphosphate + diphosphate</text>
        <dbReference type="Rhea" id="RHEA:22408"/>
        <dbReference type="ChEBI" id="CHEBI:33019"/>
        <dbReference type="ChEBI" id="CHEBI:57623"/>
        <dbReference type="ChEBI" id="CHEBI:58057"/>
        <dbReference type="ChEBI" id="CHEBI:128769"/>
        <dbReference type="EC" id="2.5.1.1"/>
    </reaction>
    <physiologicalReaction direction="left-to-right" evidence="5">
        <dbReference type="Rhea" id="RHEA:22409"/>
    </physiologicalReaction>
</comment>
<comment type="catalytic activity">
    <reaction evidence="5">
        <text>isopentenyl diphosphate + (2E)-geranyl diphosphate = (2E,6E)-farnesyl diphosphate + diphosphate</text>
        <dbReference type="Rhea" id="RHEA:19361"/>
        <dbReference type="ChEBI" id="CHEBI:33019"/>
        <dbReference type="ChEBI" id="CHEBI:58057"/>
        <dbReference type="ChEBI" id="CHEBI:128769"/>
        <dbReference type="ChEBI" id="CHEBI:175763"/>
        <dbReference type="EC" id="2.5.1.10"/>
    </reaction>
    <physiologicalReaction direction="left-to-right" evidence="5">
        <dbReference type="Rhea" id="RHEA:19362"/>
    </physiologicalReaction>
</comment>
<comment type="cofactor">
    <cofactor evidence="2">
        <name>Mg(2+)</name>
        <dbReference type="ChEBI" id="CHEBI:18420"/>
    </cofactor>
    <text evidence="2">Binds 2 Mg(2+) ions per subunit.</text>
</comment>
<comment type="pathway">
    <text evidence="5">Isoprenoid biosynthesis; farnesyl diphosphate biosynthesis; farnesyl diphosphate from geranyl diphosphate and isopentenyl diphosphate: step 1/1.</text>
</comment>
<comment type="pathway">
    <text evidence="5">Isoprenoid biosynthesis; geranyl diphosphate biosynthesis; geranyl diphosphate from dimethylallyl diphosphate and isopentenyl diphosphate: step 1/1.</text>
</comment>
<comment type="similarity">
    <text evidence="4">Belongs to the FPP/GGPP synthase family.</text>
</comment>
<name>ERG20_GIBZE</name>
<accession>V6RG22</accession>
<gene>
    <name evidence="3" type="primary">ERG20</name>
    <name type="ORF">FG06784</name>
    <name type="ORF">FGRAMPH1_01T23179</name>
</gene>
<protein>
    <recommendedName>
        <fullName evidence="3">Farnesyl pyrophosphate synthase ERG20</fullName>
        <shortName evidence="4">FPP synthase</shortName>
        <shortName evidence="4">FPS</shortName>
        <ecNumber evidence="5">2.5.1.10</ecNumber>
    </recommendedName>
    <alternativeName>
        <fullName evidence="4">(2E,6E)-farnesyl diphosphate synthase ERG20</fullName>
    </alternativeName>
    <alternativeName>
        <fullName evidence="4">Dimethylallyltranstransferase ERG20</fullName>
        <ecNumber evidence="5">2.5.1.1</ecNumber>
    </alternativeName>
    <alternativeName>
        <fullName evidence="3">Ergosterol biosynthesis protein 20</fullName>
    </alternativeName>
    <alternativeName>
        <fullName evidence="4">Farnesyl diphosphate synthase ERG20</fullName>
    </alternativeName>
    <alternativeName>
        <fullName evidence="4">Geranyltranstransferase ERG20</fullName>
    </alternativeName>
</protein>
<evidence type="ECO:0000250" key="1">
    <source>
        <dbReference type="UniProtKB" id="P08524"/>
    </source>
</evidence>
<evidence type="ECO:0000250" key="2">
    <source>
        <dbReference type="UniProtKB" id="Q12051"/>
    </source>
</evidence>
<evidence type="ECO:0000303" key="3">
    <source>
    </source>
</evidence>
<evidence type="ECO:0000305" key="4"/>
<evidence type="ECO:0000305" key="5">
    <source>
    </source>
</evidence>
<sequence length="347" mass="40012">MAKQTTLDEFNAVFPKLEEVLLDHARSYKLPQEQLDWYKKSLEANPLGGKCNRGMSVPDSVSLLLEKPLTEEQYFQAATLGWMTELLQAFFLVSDDIMDSSITRRGQPCWYRQEGVGMIAINDAFMLEMAIYTLLKKYFRTHPAYVDLIELFHETTFQTELGQLCDLLTAPEDNVNLDNFSLEKYSFIVIYKTAYYSFYLPVALALHQLNLATPSNLKQAEDILIPLGEYFQIQDDYLDNFGKPEHIGKIGTDIKDNKCSWLVNQALAVATPEQRKILEENYGRKDDAKELVVKKLYDDLKLEQLYLDYEEKVVGQIRERIANIDESGGLKKTVFEAFLAKIYKRSK</sequence>
<proteinExistence type="inferred from homology"/>